<organism>
    <name type="scientific">Homo sapiens</name>
    <name type="common">Human</name>
    <dbReference type="NCBI Taxonomy" id="9606"/>
    <lineage>
        <taxon>Eukaryota</taxon>
        <taxon>Metazoa</taxon>
        <taxon>Chordata</taxon>
        <taxon>Craniata</taxon>
        <taxon>Vertebrata</taxon>
        <taxon>Euteleostomi</taxon>
        <taxon>Mammalia</taxon>
        <taxon>Eutheria</taxon>
        <taxon>Euarchontoglires</taxon>
        <taxon>Primates</taxon>
        <taxon>Haplorrhini</taxon>
        <taxon>Catarrhini</taxon>
        <taxon>Hominidae</taxon>
        <taxon>Homo</taxon>
    </lineage>
</organism>
<feature type="chain" id="PRO_0000096681" description="NEDD4-binding protein 2">
    <location>
        <begin position="1"/>
        <end position="1770"/>
    </location>
</feature>
<feature type="domain" description="CUE" evidence="4">
    <location>
        <begin position="46"/>
        <end position="89"/>
    </location>
</feature>
<feature type="domain" description="Smr" evidence="3">
    <location>
        <begin position="1691"/>
        <end position="1770"/>
    </location>
</feature>
<feature type="region of interest" description="Disordered" evidence="5">
    <location>
        <begin position="1"/>
        <end position="40"/>
    </location>
</feature>
<feature type="region of interest" description="Disordered" evidence="5">
    <location>
        <begin position="95"/>
        <end position="129"/>
    </location>
</feature>
<feature type="region of interest" description="Disordered" evidence="5">
    <location>
        <begin position="712"/>
        <end position="756"/>
    </location>
</feature>
<feature type="region of interest" description="Disordered" evidence="5">
    <location>
        <begin position="795"/>
        <end position="822"/>
    </location>
</feature>
<feature type="region of interest" description="Disordered" evidence="5">
    <location>
        <begin position="836"/>
        <end position="862"/>
    </location>
</feature>
<feature type="region of interest" description="Disordered" evidence="5">
    <location>
        <begin position="890"/>
        <end position="913"/>
    </location>
</feature>
<feature type="region of interest" description="Disordered" evidence="5">
    <location>
        <begin position="1580"/>
        <end position="1606"/>
    </location>
</feature>
<feature type="coiled-coil region" evidence="2">
    <location>
        <begin position="90"/>
        <end position="177"/>
    </location>
</feature>
<feature type="coiled-coil region" evidence="2">
    <location>
        <begin position="218"/>
        <end position="259"/>
    </location>
</feature>
<feature type="compositionally biased region" description="Polar residues" evidence="5">
    <location>
        <begin position="97"/>
        <end position="108"/>
    </location>
</feature>
<feature type="compositionally biased region" description="Basic and acidic residues" evidence="5">
    <location>
        <begin position="115"/>
        <end position="129"/>
    </location>
</feature>
<feature type="compositionally biased region" description="Basic and acidic residues" evidence="5">
    <location>
        <begin position="843"/>
        <end position="856"/>
    </location>
</feature>
<feature type="binding site" evidence="2">
    <location>
        <begin position="447"/>
        <end position="454"/>
    </location>
    <ligand>
        <name>ATP</name>
        <dbReference type="ChEBI" id="CHEBI:30616"/>
    </ligand>
</feature>
<feature type="modified residue" description="Phosphoserine" evidence="12">
    <location>
        <position position="906"/>
    </location>
</feature>
<feature type="modified residue" description="Phosphothreonine" evidence="12">
    <location>
        <position position="1210"/>
    </location>
</feature>
<feature type="splice variant" id="VSP_009721" description="In isoform 2." evidence="10">
    <location>
        <begin position="1596"/>
        <end position="1612"/>
    </location>
</feature>
<feature type="sequence variant" id="VAR_051215" description="In dbSNP:rs17511668.">
    <original>S</original>
    <variation>I</variation>
    <location>
        <position position="101"/>
    </location>
</feature>
<feature type="sequence variant" id="VAR_051216" description="In dbSNP:rs10014170.">
    <original>M</original>
    <variation>V</variation>
    <location>
        <position position="196"/>
    </location>
</feature>
<feature type="sequence variant" id="VAR_035474" description="In a breast cancer sample; somatic mutation." evidence="9">
    <original>P</original>
    <variation>A</variation>
    <location>
        <position position="283"/>
    </location>
</feature>
<feature type="sequence variant" id="VAR_051217" description="In dbSNP:rs794001." evidence="6 7 8">
    <original>D</original>
    <variation>N</variation>
    <location>
        <position position="611"/>
    </location>
</feature>
<feature type="sequence variant" id="VAR_051218" description="In dbSNP:rs2271395.">
    <original>T</original>
    <variation>A</variation>
    <location>
        <position position="1587"/>
    </location>
</feature>
<feature type="sequence conflict" description="In Ref. 2; AAI26467." evidence="11" ref="2">
    <original>E</original>
    <variation>K</variation>
    <location>
        <position position="118"/>
    </location>
</feature>
<feature type="sequence conflict" description="In Ref. 3; BAA91748." evidence="11" ref="3">
    <original>S</original>
    <variation>F</variation>
    <location>
        <position position="428"/>
    </location>
</feature>
<feature type="sequence conflict" description="In Ref. 1; AAP22172." evidence="11" ref="1">
    <original>K</original>
    <variation>Q</variation>
    <location>
        <position position="660"/>
    </location>
</feature>
<feature type="sequence conflict" description="In Ref. 4; BAA92651." evidence="11" ref="4">
    <original>K</original>
    <variation>E</variation>
    <location>
        <position position="778"/>
    </location>
</feature>
<feature type="sequence conflict" description="In Ref. 2; AAI26467 and 4; BAA92651." evidence="11" ref="2 4">
    <original>S</original>
    <variation>R</variation>
    <location>
        <position position="1353"/>
    </location>
</feature>
<feature type="sequence conflict" description="In Ref. 1; AAP22172." evidence="11" ref="1">
    <original>L</original>
    <variation>V</variation>
    <location>
        <position position="1524"/>
    </location>
</feature>
<feature type="sequence conflict" description="In Ref. 1; AAP22172." evidence="11" ref="1">
    <original>S</original>
    <variation>F</variation>
    <location>
        <position position="1591"/>
    </location>
</feature>
<feature type="helix" evidence="14">
    <location>
        <begin position="1669"/>
        <end position="1685"/>
    </location>
</feature>
<feature type="helix" evidence="14">
    <location>
        <begin position="1686"/>
        <end position="1688"/>
    </location>
</feature>
<feature type="strand" evidence="13">
    <location>
        <begin position="1690"/>
        <end position="1692"/>
    </location>
</feature>
<feature type="helix" evidence="15">
    <location>
        <begin position="1698"/>
        <end position="1719"/>
    </location>
</feature>
<feature type="strand" evidence="15">
    <location>
        <begin position="1724"/>
        <end position="1728"/>
    </location>
</feature>
<feature type="strand" evidence="15">
    <location>
        <begin position="1734"/>
        <end position="1736"/>
    </location>
</feature>
<feature type="helix" evidence="15">
    <location>
        <begin position="1742"/>
        <end position="1752"/>
    </location>
</feature>
<feature type="strand" evidence="15">
    <location>
        <begin position="1757"/>
        <end position="1761"/>
    </location>
</feature>
<feature type="strand" evidence="15">
    <location>
        <begin position="1764"/>
        <end position="1768"/>
    </location>
</feature>
<accession>Q86UW6</accession>
<accession>A0AVR3</accession>
<accession>Q9NVK2</accession>
<accession>Q9P2D4</accession>
<name>N4BP2_HUMAN</name>
<sequence length="1770" mass="198801">MPRRRKNLGGNPFRKTANPKEVVVSSVASREEPTTTLPSMGETKVDQEELFTSISEIFSDLDPDVVYLMLSECDFKVENAMDCLLELSATDTKIEESSSQSFVASENQVGAAESKIMEKRPEEESEDSKMDSFLDMQLTEDLDSLIQNAFEKLNSSPDDQVYSFLPSQDVNSFNDSSEFINPDSSNMTPIFSTQNMNLNGENLENSGSTLSLNPLPSHSVLNESKCFIKDNTLALESNYPEDSLLSSSLNVASDSIAGCSSLNQKQKELLESECVEAQFSEAPVDLDASEPQACLNLPGLDLPGTGGDQKSTRVSDVFLPSEGFNFKPHKHPELPTKGKDVSYCPVLAPLPLLLPPPPPPPMWNPMIPAFDLFQGNHGFVAPVVTTAAHWRSVNYTFPPSVISHTSPTKVWRNKDGTSAYQVQETPVSQVVRKKTSYVGLVLVLLRGLPGSGKSFLARTLQEDNPSGVILSTDDYFYINGQYQFDVKYLGEAHEWNQNRAKEAFEKKISPIIIDNTNLQAWEMKPYVALSQKHKYKVLFREPDTWWKFKPKELARRNIHGVSKEKITRMLEHYQRFVSVPIIMSSSVPEKIERIELCAYSCEDRSTSPRDDEDIISEKEENILSLSLKHLEFTEEKNLDVTKETMLPENVAYLSNADLNKRRKEISDMNPSIQSALILETPHMYFSDSESKLQATDKSENEQIEMVAVKGYSKTDTDSSMERVSPSTCCSENNQEDCDLANSGPLQNEKSSPGEIVEERATVTKKAFGKQKSKSTLEKFPRHELSNFVGDWPVDKTIGQRTKRNRKTEKTSSVQSDKKYNYPQSHKLVNSVSVNTDCVQQRGSPHESVEDGRKSQCDDASEPLNSYKYDAYKNIDKNSFNIMGDWPSSDSLAQREHRSRMPKTGLSEPNLEIGTNDKMNEISLSTAHEACWGTSSQKLKTLGSSNLGSSEMLLSEMTCESQTCLSKKSHGQHTSLPLTFTNSAPTVSGVVEPQTLAECQEQMPKRDPGKEVGMCTQTEPQDFALLWKIEKNKISISDSIKVLTGRLDGFKPKVFNINTKSDVQEAIPYRVMYDKSTFVEESELTSADESENLNILCKLFGSFSLEALKDLYERCNKDIIWATSLLLDSETKLCEDTEFENFQKSCDGSQIGPFSLGLNLKEIISQRGTLENSNSPVPEFSHGIGISNADSQSTCDAERGNSEQAEMRAVTPENHESMTSIFPSAAVGLKNNNDILPNSQEELLYSSKQSFPGILKATTPKDMSETEKNLVVTETGDNIHSPSHFSDIFNFVSSTSNLELNEEIYFTDSLEIKRNENFPKDYVKFSDEEEFMNEDEKEMKEILMAGSSLSAGVSGEDKTEILNPTPAMAKSLTIDCLELALPPELAFQLNELFGPVGIDSGSLTVEDCVVHIDLNLAKVIHEKWKESVMERQRQEEVSCGKFMQDPSLVGHTGLDNPEQKSSQRTGKKLLKTLTASEMLPLLDHWNTQTKKVSLREIMSEEIALQEKHNLKRETLMFEKDCATKLKEKQLFKIFPAINQNFLVDIFKDHNYSLEHTVQFLNCVLEGDPVKTVVAQEFVHQNENVTSHTGQKSKEKKPKKLKETEETPSELSFQDFEYPDYDDYRAEAFLHQQKRMECYSKAKEAYRIGKKNVATFYAQQGTLHEQKMKEANHLAAIEIFEKVNASLLPQNVLDLHGLHVDEALEHLMRVLEKKTEEFKQNGGKPYLSVITGRGNHSQGGVARIKPAVIKYLISHSFRFSEIKPGCLKVMLK</sequence>
<evidence type="ECO:0000250" key="1"/>
<evidence type="ECO:0000255" key="2"/>
<evidence type="ECO:0000255" key="3">
    <source>
        <dbReference type="PROSITE-ProRule" id="PRU00321"/>
    </source>
</evidence>
<evidence type="ECO:0000255" key="4">
    <source>
        <dbReference type="PROSITE-ProRule" id="PRU00468"/>
    </source>
</evidence>
<evidence type="ECO:0000256" key="5">
    <source>
        <dbReference type="SAM" id="MobiDB-lite"/>
    </source>
</evidence>
<evidence type="ECO:0000269" key="6">
    <source>
    </source>
</evidence>
<evidence type="ECO:0000269" key="7">
    <source>
    </source>
</evidence>
<evidence type="ECO:0000269" key="8">
    <source>
    </source>
</evidence>
<evidence type="ECO:0000269" key="9">
    <source>
    </source>
</evidence>
<evidence type="ECO:0000303" key="10">
    <source>
    </source>
</evidence>
<evidence type="ECO:0000305" key="11"/>
<evidence type="ECO:0007744" key="12">
    <source>
    </source>
</evidence>
<evidence type="ECO:0007829" key="13">
    <source>
        <dbReference type="PDB" id="2D9I"/>
    </source>
</evidence>
<evidence type="ECO:0007829" key="14">
    <source>
        <dbReference type="PDB" id="2VKC"/>
    </source>
</evidence>
<evidence type="ECO:0007829" key="15">
    <source>
        <dbReference type="PDB" id="3FAU"/>
    </source>
</evidence>
<keyword id="KW-0002">3D-structure</keyword>
<keyword id="KW-0025">Alternative splicing</keyword>
<keyword id="KW-0067">ATP-binding</keyword>
<keyword id="KW-0175">Coiled coil</keyword>
<keyword id="KW-0963">Cytoplasm</keyword>
<keyword id="KW-0378">Hydrolase</keyword>
<keyword id="KW-0547">Nucleotide-binding</keyword>
<keyword id="KW-0597">Phosphoprotein</keyword>
<keyword id="KW-1267">Proteomics identification</keyword>
<keyword id="KW-1185">Reference proteome</keyword>
<keyword id="KW-0832">Ubl conjugation</keyword>
<gene>
    <name type="primary">N4BP2</name>
    <name type="synonym">B3BP</name>
    <name type="synonym">KIAA1413</name>
</gene>
<dbReference type="EC" id="3.-.-.-"/>
<dbReference type="EMBL" id="AY267013">
    <property type="protein sequence ID" value="AAP22172.1"/>
    <property type="molecule type" value="mRNA"/>
</dbReference>
<dbReference type="EMBL" id="BC126466">
    <property type="protein sequence ID" value="AAI26467.1"/>
    <property type="molecule type" value="mRNA"/>
</dbReference>
<dbReference type="EMBL" id="AK001542">
    <property type="protein sequence ID" value="BAA91748.1"/>
    <property type="molecule type" value="mRNA"/>
</dbReference>
<dbReference type="EMBL" id="AB037834">
    <property type="protein sequence ID" value="BAA92651.1"/>
    <property type="molecule type" value="mRNA"/>
</dbReference>
<dbReference type="CCDS" id="CCDS3457.1">
    <molecule id="Q86UW6-1"/>
</dbReference>
<dbReference type="RefSeq" id="NP_001305288.1">
    <property type="nucleotide sequence ID" value="NM_001318359.1"/>
</dbReference>
<dbReference type="RefSeq" id="NP_060647.2">
    <molecule id="Q86UW6-1"/>
    <property type="nucleotide sequence ID" value="NM_018177.5"/>
</dbReference>
<dbReference type="RefSeq" id="XP_011512020.1">
    <property type="nucleotide sequence ID" value="XM_011513718.2"/>
</dbReference>
<dbReference type="RefSeq" id="XP_016863887.1">
    <molecule id="Q86UW6-1"/>
    <property type="nucleotide sequence ID" value="XM_017008398.1"/>
</dbReference>
<dbReference type="RefSeq" id="XP_047271910.1">
    <molecule id="Q86UW6-1"/>
    <property type="nucleotide sequence ID" value="XM_047415954.1"/>
</dbReference>
<dbReference type="RefSeq" id="XP_047271911.1">
    <molecule id="Q86UW6-2"/>
    <property type="nucleotide sequence ID" value="XM_047415955.1"/>
</dbReference>
<dbReference type="RefSeq" id="XP_054206455.1">
    <molecule id="Q86UW6-1"/>
    <property type="nucleotide sequence ID" value="XM_054350480.1"/>
</dbReference>
<dbReference type="RefSeq" id="XP_054206456.1">
    <molecule id="Q86UW6-1"/>
    <property type="nucleotide sequence ID" value="XM_054350481.1"/>
</dbReference>
<dbReference type="RefSeq" id="XP_054206457.1">
    <molecule id="Q86UW6-2"/>
    <property type="nucleotide sequence ID" value="XM_054350482.1"/>
</dbReference>
<dbReference type="PDB" id="2D9I">
    <property type="method" value="NMR"/>
    <property type="chains" value="A=1688-1770"/>
</dbReference>
<dbReference type="PDB" id="2VKC">
    <property type="method" value="NMR"/>
    <property type="chains" value="A=1657-1770"/>
</dbReference>
<dbReference type="PDB" id="3BHB">
    <property type="method" value="X-ray"/>
    <property type="resolution" value="2.20 A"/>
    <property type="chains" value="C=129-138"/>
</dbReference>
<dbReference type="PDB" id="3FAU">
    <property type="method" value="X-ray"/>
    <property type="resolution" value="1.90 A"/>
    <property type="chains" value="A/B/C/D=1691-1770"/>
</dbReference>
<dbReference type="PDBsum" id="2D9I"/>
<dbReference type="PDBsum" id="2VKC"/>
<dbReference type="PDBsum" id="3BHB"/>
<dbReference type="PDBsum" id="3FAU"/>
<dbReference type="SMR" id="Q86UW6"/>
<dbReference type="BioGRID" id="120848">
    <property type="interactions" value="91"/>
</dbReference>
<dbReference type="CORUM" id="Q86UW6"/>
<dbReference type="FunCoup" id="Q86UW6">
    <property type="interactions" value="1217"/>
</dbReference>
<dbReference type="IntAct" id="Q86UW6">
    <property type="interactions" value="34"/>
</dbReference>
<dbReference type="STRING" id="9606.ENSP00000261435"/>
<dbReference type="iPTMnet" id="Q86UW6"/>
<dbReference type="PhosphoSitePlus" id="Q86UW6"/>
<dbReference type="BioMuta" id="N4BP2"/>
<dbReference type="DMDM" id="145559498"/>
<dbReference type="jPOST" id="Q86UW6"/>
<dbReference type="MassIVE" id="Q86UW6"/>
<dbReference type="PaxDb" id="9606-ENSP00000261435"/>
<dbReference type="PeptideAtlas" id="Q86UW6"/>
<dbReference type="ProteomicsDB" id="69917">
    <molecule id="Q86UW6-1"/>
</dbReference>
<dbReference type="ProteomicsDB" id="69918">
    <molecule id="Q86UW6-2"/>
</dbReference>
<dbReference type="Pumba" id="Q86UW6"/>
<dbReference type="Antibodypedia" id="23545">
    <property type="antibodies" value="28 antibodies from 13 providers"/>
</dbReference>
<dbReference type="DNASU" id="55728"/>
<dbReference type="Ensembl" id="ENST00000261435.11">
    <molecule id="Q86UW6-1"/>
    <property type="protein sequence ID" value="ENSP00000261435.6"/>
    <property type="gene ID" value="ENSG00000078177.15"/>
</dbReference>
<dbReference type="GeneID" id="55728"/>
<dbReference type="KEGG" id="hsa:55728"/>
<dbReference type="MANE-Select" id="ENST00000261435.11">
    <property type="protein sequence ID" value="ENSP00000261435.6"/>
    <property type="RefSeq nucleotide sequence ID" value="NM_018177.6"/>
    <property type="RefSeq protein sequence ID" value="NP_060647.2"/>
</dbReference>
<dbReference type="UCSC" id="uc003guy.5">
    <molecule id="Q86UW6-1"/>
    <property type="organism name" value="human"/>
</dbReference>
<dbReference type="AGR" id="HGNC:29851"/>
<dbReference type="CTD" id="55728"/>
<dbReference type="DisGeNET" id="55728"/>
<dbReference type="GeneCards" id="N4BP2"/>
<dbReference type="HGNC" id="HGNC:29851">
    <property type="gene designation" value="N4BP2"/>
</dbReference>
<dbReference type="HPA" id="ENSG00000078177">
    <property type="expression patterns" value="Tissue enhanced (lymphoid)"/>
</dbReference>
<dbReference type="MIM" id="619139">
    <property type="type" value="gene"/>
</dbReference>
<dbReference type="neXtProt" id="NX_Q86UW6"/>
<dbReference type="OpenTargets" id="ENSG00000078177"/>
<dbReference type="PharmGKB" id="PA162396580"/>
<dbReference type="VEuPathDB" id="HostDB:ENSG00000078177"/>
<dbReference type="eggNOG" id="KOG2401">
    <property type="taxonomic scope" value="Eukaryota"/>
</dbReference>
<dbReference type="GeneTree" id="ENSGT00940000160604"/>
<dbReference type="InParanoid" id="Q86UW6"/>
<dbReference type="OMA" id="MTCENKT"/>
<dbReference type="OrthoDB" id="3231855at2759"/>
<dbReference type="PAN-GO" id="Q86UW6">
    <property type="GO annotations" value="1 GO annotation based on evolutionary models"/>
</dbReference>
<dbReference type="PhylomeDB" id="Q86UW6"/>
<dbReference type="TreeFam" id="TF327016"/>
<dbReference type="PathwayCommons" id="Q86UW6"/>
<dbReference type="SignaLink" id="Q86UW6"/>
<dbReference type="BioGRID-ORCS" id="55728">
    <property type="hits" value="34 hits in 1152 CRISPR screens"/>
</dbReference>
<dbReference type="CD-CODE" id="232F8A39">
    <property type="entry name" value="P-body"/>
</dbReference>
<dbReference type="CD-CODE" id="DEE660B4">
    <property type="entry name" value="Stress granule"/>
</dbReference>
<dbReference type="ChiTaRS" id="N4BP2">
    <property type="organism name" value="human"/>
</dbReference>
<dbReference type="EvolutionaryTrace" id="Q86UW6"/>
<dbReference type="GenomeRNAi" id="55728"/>
<dbReference type="Pharos" id="Q86UW6">
    <property type="development level" value="Tbio"/>
</dbReference>
<dbReference type="PRO" id="PR:Q86UW6"/>
<dbReference type="Proteomes" id="UP000005640">
    <property type="component" value="Chromosome 4"/>
</dbReference>
<dbReference type="RNAct" id="Q86UW6">
    <property type="molecule type" value="protein"/>
</dbReference>
<dbReference type="Bgee" id="ENSG00000078177">
    <property type="expression patterns" value="Expressed in tibia and 166 other cell types or tissues"/>
</dbReference>
<dbReference type="ExpressionAtlas" id="Q86UW6">
    <property type="expression patterns" value="baseline and differential"/>
</dbReference>
<dbReference type="GO" id="GO:0005829">
    <property type="term" value="C:cytosol"/>
    <property type="evidence" value="ECO:0007669"/>
    <property type="project" value="Ensembl"/>
</dbReference>
<dbReference type="GO" id="GO:0005524">
    <property type="term" value="F:ATP binding"/>
    <property type="evidence" value="ECO:0000314"/>
    <property type="project" value="MGI"/>
</dbReference>
<dbReference type="GO" id="GO:0046404">
    <property type="term" value="F:ATP-dependent polydeoxyribonucleotide 5'-hydroxyl-kinase activity"/>
    <property type="evidence" value="ECO:0000314"/>
    <property type="project" value="MGI"/>
</dbReference>
<dbReference type="GO" id="GO:0004520">
    <property type="term" value="F:DNA endonuclease activity"/>
    <property type="evidence" value="ECO:0000314"/>
    <property type="project" value="FlyBase"/>
</dbReference>
<dbReference type="GO" id="GO:0004519">
    <property type="term" value="F:endonuclease activity"/>
    <property type="evidence" value="ECO:0000314"/>
    <property type="project" value="MGI"/>
</dbReference>
<dbReference type="GO" id="GO:0043130">
    <property type="term" value="F:ubiquitin binding"/>
    <property type="evidence" value="ECO:0007669"/>
    <property type="project" value="InterPro"/>
</dbReference>
<dbReference type="CDD" id="cd14365">
    <property type="entry name" value="CUE_N4BP2"/>
    <property type="match status" value="1"/>
</dbReference>
<dbReference type="FunFam" id="3.40.50.300:FF:000620">
    <property type="entry name" value="NEDD4-binding protein 2 isoform X1"/>
    <property type="match status" value="1"/>
</dbReference>
<dbReference type="FunFam" id="3.30.1370.110:FF:000003">
    <property type="entry name" value="NEDD4-binding protein 2 isoform X2"/>
    <property type="match status" value="1"/>
</dbReference>
<dbReference type="Gene3D" id="3.30.1370.110">
    <property type="match status" value="1"/>
</dbReference>
<dbReference type="Gene3D" id="3.40.50.300">
    <property type="entry name" value="P-loop containing nucleotide triphosphate hydrolases"/>
    <property type="match status" value="1"/>
</dbReference>
<dbReference type="InterPro" id="IPR003892">
    <property type="entry name" value="CUE"/>
</dbReference>
<dbReference type="InterPro" id="IPR013899">
    <property type="entry name" value="DUF1771"/>
</dbReference>
<dbReference type="InterPro" id="IPR056718">
    <property type="entry name" value="DUF7816"/>
</dbReference>
<dbReference type="InterPro" id="IPR056719">
    <property type="entry name" value="DUF7817"/>
</dbReference>
<dbReference type="InterPro" id="IPR056720">
    <property type="entry name" value="DUF7818"/>
</dbReference>
<dbReference type="InterPro" id="IPR052772">
    <property type="entry name" value="Endo/PolyKinase_Domain-Protein"/>
</dbReference>
<dbReference type="InterPro" id="IPR041801">
    <property type="entry name" value="N4BP2_CUE"/>
</dbReference>
<dbReference type="InterPro" id="IPR027417">
    <property type="entry name" value="P-loop_NTPase"/>
</dbReference>
<dbReference type="InterPro" id="IPR002625">
    <property type="entry name" value="Smr_dom"/>
</dbReference>
<dbReference type="InterPro" id="IPR036063">
    <property type="entry name" value="Smr_dom_sf"/>
</dbReference>
<dbReference type="InterPro" id="IPR009060">
    <property type="entry name" value="UBA-like_sf"/>
</dbReference>
<dbReference type="PANTHER" id="PTHR46535">
    <property type="entry name" value="NEDD4-BINDING PROTEIN 2"/>
    <property type="match status" value="1"/>
</dbReference>
<dbReference type="PANTHER" id="PTHR46535:SF1">
    <property type="entry name" value="NEDD4-BINDING PROTEIN 2"/>
    <property type="match status" value="1"/>
</dbReference>
<dbReference type="Pfam" id="PF13671">
    <property type="entry name" value="AAA_33"/>
    <property type="match status" value="1"/>
</dbReference>
<dbReference type="Pfam" id="PF08590">
    <property type="entry name" value="DUF1771"/>
    <property type="match status" value="1"/>
</dbReference>
<dbReference type="Pfam" id="PF25124">
    <property type="entry name" value="DUF7816"/>
    <property type="match status" value="1"/>
</dbReference>
<dbReference type="Pfam" id="PF25125">
    <property type="entry name" value="DUF7817"/>
    <property type="match status" value="1"/>
</dbReference>
<dbReference type="Pfam" id="PF25126">
    <property type="entry name" value="DUF7818"/>
    <property type="match status" value="1"/>
</dbReference>
<dbReference type="Pfam" id="PF01713">
    <property type="entry name" value="Smr"/>
    <property type="match status" value="1"/>
</dbReference>
<dbReference type="SMART" id="SM01162">
    <property type="entry name" value="DUF1771"/>
    <property type="match status" value="1"/>
</dbReference>
<dbReference type="SMART" id="SM00463">
    <property type="entry name" value="SMR"/>
    <property type="match status" value="1"/>
</dbReference>
<dbReference type="SUPFAM" id="SSF52540">
    <property type="entry name" value="P-loop containing nucleoside triphosphate hydrolases"/>
    <property type="match status" value="1"/>
</dbReference>
<dbReference type="SUPFAM" id="SSF160443">
    <property type="entry name" value="SMR domain-like"/>
    <property type="match status" value="1"/>
</dbReference>
<dbReference type="SUPFAM" id="SSF46934">
    <property type="entry name" value="UBA-like"/>
    <property type="match status" value="1"/>
</dbReference>
<dbReference type="PROSITE" id="PS51140">
    <property type="entry name" value="CUE"/>
    <property type="match status" value="1"/>
</dbReference>
<dbReference type="PROSITE" id="PS50828">
    <property type="entry name" value="SMR"/>
    <property type="match status" value="1"/>
</dbReference>
<proteinExistence type="evidence at protein level"/>
<reference key="1">
    <citation type="journal article" date="2003" name="J. Biol. Chem.">
        <title>Identification and characterization of BCL-3-binding protein: implications for transcription and DNA repair or recombination.</title>
        <authorList>
            <person name="Watanabe N."/>
            <person name="Wachi S."/>
            <person name="Fujita T."/>
        </authorList>
    </citation>
    <scope>NUCLEOTIDE SEQUENCE [MRNA] (ISOFORM 1)</scope>
    <scope>FUNCTION</scope>
    <scope>INTERACTION WITH BCL3 AND CREBBP</scope>
    <scope>VARIANT ASN-611</scope>
    <source>
        <tissue>T-cell</tissue>
    </source>
</reference>
<reference key="2">
    <citation type="journal article" date="2004" name="Genome Res.">
        <title>The status, quality, and expansion of the NIH full-length cDNA project: the Mammalian Gene Collection (MGC).</title>
        <authorList>
            <consortium name="The MGC Project Team"/>
        </authorList>
    </citation>
    <scope>NUCLEOTIDE SEQUENCE [LARGE SCALE MRNA] (ISOFORM 1)</scope>
    <scope>VARIANT ASN-611</scope>
    <source>
        <tissue>Lung</tissue>
    </source>
</reference>
<reference key="3">
    <citation type="journal article" date="2004" name="Nat. Genet.">
        <title>Complete sequencing and characterization of 21,243 full-length human cDNAs.</title>
        <authorList>
            <person name="Ota T."/>
            <person name="Suzuki Y."/>
            <person name="Nishikawa T."/>
            <person name="Otsuki T."/>
            <person name="Sugiyama T."/>
            <person name="Irie R."/>
            <person name="Wakamatsu A."/>
            <person name="Hayashi K."/>
            <person name="Sato H."/>
            <person name="Nagai K."/>
            <person name="Kimura K."/>
            <person name="Makita H."/>
            <person name="Sekine M."/>
            <person name="Obayashi M."/>
            <person name="Nishi T."/>
            <person name="Shibahara T."/>
            <person name="Tanaka T."/>
            <person name="Ishii S."/>
            <person name="Yamamoto J."/>
            <person name="Saito K."/>
            <person name="Kawai Y."/>
            <person name="Isono Y."/>
            <person name="Nakamura Y."/>
            <person name="Nagahari K."/>
            <person name="Murakami K."/>
            <person name="Yasuda T."/>
            <person name="Iwayanagi T."/>
            <person name="Wagatsuma M."/>
            <person name="Shiratori A."/>
            <person name="Sudo H."/>
            <person name="Hosoiri T."/>
            <person name="Kaku Y."/>
            <person name="Kodaira H."/>
            <person name="Kondo H."/>
            <person name="Sugawara M."/>
            <person name="Takahashi M."/>
            <person name="Kanda K."/>
            <person name="Yokoi T."/>
            <person name="Furuya T."/>
            <person name="Kikkawa E."/>
            <person name="Omura Y."/>
            <person name="Abe K."/>
            <person name="Kamihara K."/>
            <person name="Katsuta N."/>
            <person name="Sato K."/>
            <person name="Tanikawa M."/>
            <person name="Yamazaki M."/>
            <person name="Ninomiya K."/>
            <person name="Ishibashi T."/>
            <person name="Yamashita H."/>
            <person name="Murakawa K."/>
            <person name="Fujimori K."/>
            <person name="Tanai H."/>
            <person name="Kimata M."/>
            <person name="Watanabe M."/>
            <person name="Hiraoka S."/>
            <person name="Chiba Y."/>
            <person name="Ishida S."/>
            <person name="Ono Y."/>
            <person name="Takiguchi S."/>
            <person name="Watanabe S."/>
            <person name="Yosida M."/>
            <person name="Hotuta T."/>
            <person name="Kusano J."/>
            <person name="Kanehori K."/>
            <person name="Takahashi-Fujii A."/>
            <person name="Hara H."/>
            <person name="Tanase T.-O."/>
            <person name="Nomura Y."/>
            <person name="Togiya S."/>
            <person name="Komai F."/>
            <person name="Hara R."/>
            <person name="Takeuchi K."/>
            <person name="Arita M."/>
            <person name="Imose N."/>
            <person name="Musashino K."/>
            <person name="Yuuki H."/>
            <person name="Oshima A."/>
            <person name="Sasaki N."/>
            <person name="Aotsuka S."/>
            <person name="Yoshikawa Y."/>
            <person name="Matsunawa H."/>
            <person name="Ichihara T."/>
            <person name="Shiohata N."/>
            <person name="Sano S."/>
            <person name="Moriya S."/>
            <person name="Momiyama H."/>
            <person name="Satoh N."/>
            <person name="Takami S."/>
            <person name="Terashima Y."/>
            <person name="Suzuki O."/>
            <person name="Nakagawa S."/>
            <person name="Senoh A."/>
            <person name="Mizoguchi H."/>
            <person name="Goto Y."/>
            <person name="Shimizu F."/>
            <person name="Wakebe H."/>
            <person name="Hishigaki H."/>
            <person name="Watanabe T."/>
            <person name="Sugiyama A."/>
            <person name="Takemoto M."/>
            <person name="Kawakami B."/>
            <person name="Yamazaki M."/>
            <person name="Watanabe K."/>
            <person name="Kumagai A."/>
            <person name="Itakura S."/>
            <person name="Fukuzumi Y."/>
            <person name="Fujimori Y."/>
            <person name="Komiyama M."/>
            <person name="Tashiro H."/>
            <person name="Tanigami A."/>
            <person name="Fujiwara T."/>
            <person name="Ono T."/>
            <person name="Yamada K."/>
            <person name="Fujii Y."/>
            <person name="Ozaki K."/>
            <person name="Hirao M."/>
            <person name="Ohmori Y."/>
            <person name="Kawabata A."/>
            <person name="Hikiji T."/>
            <person name="Kobatake N."/>
            <person name="Inagaki H."/>
            <person name="Ikema Y."/>
            <person name="Okamoto S."/>
            <person name="Okitani R."/>
            <person name="Kawakami T."/>
            <person name="Noguchi S."/>
            <person name="Itoh T."/>
            <person name="Shigeta K."/>
            <person name="Senba T."/>
            <person name="Matsumura K."/>
            <person name="Nakajima Y."/>
            <person name="Mizuno T."/>
            <person name="Morinaga M."/>
            <person name="Sasaki M."/>
            <person name="Togashi T."/>
            <person name="Oyama M."/>
            <person name="Hata H."/>
            <person name="Watanabe M."/>
            <person name="Komatsu T."/>
            <person name="Mizushima-Sugano J."/>
            <person name="Satoh T."/>
            <person name="Shirai Y."/>
            <person name="Takahashi Y."/>
            <person name="Nakagawa K."/>
            <person name="Okumura K."/>
            <person name="Nagase T."/>
            <person name="Nomura N."/>
            <person name="Kikuchi H."/>
            <person name="Masuho Y."/>
            <person name="Yamashita R."/>
            <person name="Nakai K."/>
            <person name="Yada T."/>
            <person name="Nakamura Y."/>
            <person name="Ohara O."/>
            <person name="Isogai T."/>
            <person name="Sugano S."/>
        </authorList>
    </citation>
    <scope>NUCLEOTIDE SEQUENCE [LARGE SCALE MRNA] OF 1-659</scope>
    <source>
        <tissue>Teratocarcinoma</tissue>
    </source>
</reference>
<reference key="4">
    <citation type="journal article" date="2000" name="DNA Res.">
        <title>Prediction of the coding sequences of unidentified human genes. XVI. The complete sequences of 150 new cDNA clones from brain which code for large proteins in vitro.</title>
        <authorList>
            <person name="Nagase T."/>
            <person name="Kikuno R."/>
            <person name="Ishikawa K."/>
            <person name="Hirosawa M."/>
            <person name="Ohara O."/>
        </authorList>
    </citation>
    <scope>NUCLEOTIDE SEQUENCE [LARGE SCALE MRNA] OF 355-1770 (ISOFORM 2)</scope>
    <scope>VARIANT ASN-611</scope>
    <source>
        <tissue>Brain</tissue>
    </source>
</reference>
<reference key="5">
    <citation type="journal article" date="2009" name="Sci. Signal.">
        <title>Quantitative phosphoproteomic analysis of T cell receptor signaling reveals system-wide modulation of protein-protein interactions.</title>
        <authorList>
            <person name="Mayya V."/>
            <person name="Lundgren D.H."/>
            <person name="Hwang S.-I."/>
            <person name="Rezaul K."/>
            <person name="Wu L."/>
            <person name="Eng J.K."/>
            <person name="Rodionov V."/>
            <person name="Han D.K."/>
        </authorList>
    </citation>
    <scope>IDENTIFICATION BY MASS SPECTROMETRY [LARGE SCALE ANALYSIS]</scope>
    <source>
        <tissue>Leukemic T-cell</tissue>
    </source>
</reference>
<reference key="6">
    <citation type="journal article" date="2013" name="J. Proteome Res.">
        <title>Toward a comprehensive characterization of a human cancer cell phosphoproteome.</title>
        <authorList>
            <person name="Zhou H."/>
            <person name="Di Palma S."/>
            <person name="Preisinger C."/>
            <person name="Peng M."/>
            <person name="Polat A.N."/>
            <person name="Heck A.J."/>
            <person name="Mohammed S."/>
        </authorList>
    </citation>
    <scope>PHOSPHORYLATION [LARGE SCALE ANALYSIS] AT SER-906 AND THR-1210</scope>
    <scope>IDENTIFICATION BY MASS SPECTROMETRY [LARGE SCALE ANALYSIS]</scope>
    <source>
        <tissue>Erythroleukemia</tissue>
    </source>
</reference>
<reference key="7">
    <citation type="submission" date="2006-06" db="PDB data bank">
        <title>Solution structure of the SMR domain of NEDD4-binding protein 2.</title>
        <authorList>
            <consortium name="RIKEN structural genomics initiative (RSGI)"/>
        </authorList>
    </citation>
    <scope>STRUCTURE BY NMR OF 1688-1770</scope>
</reference>
<reference key="8">
    <citation type="journal article" date="2006" name="Science">
        <title>The consensus coding sequences of human breast and colorectal cancers.</title>
        <authorList>
            <person name="Sjoeblom T."/>
            <person name="Jones S."/>
            <person name="Wood L.D."/>
            <person name="Parsons D.W."/>
            <person name="Lin J."/>
            <person name="Barber T.D."/>
            <person name="Mandelker D."/>
            <person name="Leary R.J."/>
            <person name="Ptak J."/>
            <person name="Silliman N."/>
            <person name="Szabo S."/>
            <person name="Buckhaults P."/>
            <person name="Farrell C."/>
            <person name="Meeh P."/>
            <person name="Markowitz S.D."/>
            <person name="Willis J."/>
            <person name="Dawson D."/>
            <person name="Willson J.K.V."/>
            <person name="Gazdar A.F."/>
            <person name="Hartigan J."/>
            <person name="Wu L."/>
            <person name="Liu C."/>
            <person name="Parmigiani G."/>
            <person name="Park B.H."/>
            <person name="Bachman K.E."/>
            <person name="Papadopoulos N."/>
            <person name="Vogelstein B."/>
            <person name="Kinzler K.W."/>
            <person name="Velculescu V.E."/>
        </authorList>
    </citation>
    <scope>VARIANT [LARGE SCALE ANALYSIS] ALA-283</scope>
</reference>
<comment type="function">
    <text evidence="7">Has 5'-polynucleotide kinase and nicking endonuclease activity. May play a role in DNA repair or recombination.</text>
</comment>
<comment type="subunit">
    <text evidence="1">Binds NEDD4 (By similarity). Binds BCL3 and CREBBP.</text>
</comment>
<comment type="subcellular location">
    <subcellularLocation>
        <location evidence="1">Cytoplasm</location>
    </subcellularLocation>
</comment>
<comment type="alternative products">
    <event type="alternative splicing"/>
    <isoform>
        <id>Q86UW6-1</id>
        <name>1</name>
        <sequence type="displayed"/>
    </isoform>
    <isoform>
        <id>Q86UW6-2</id>
        <name>2</name>
        <sequence type="described" ref="VSP_009721"/>
    </isoform>
</comment>
<comment type="domain">
    <text>The Smr domain has nicking endonuclease activity, but no significant double strand cleavage or exonuclease activity.</text>
</comment>
<comment type="PTM">
    <text evidence="1">Ubiquitinated; this targets the protein for degradation by the proteasome.</text>
</comment>
<protein>
    <recommendedName>
        <fullName>NEDD4-binding protein 2</fullName>
        <shortName>N4BP2</shortName>
        <ecNumber>3.-.-.-</ecNumber>
    </recommendedName>
    <alternativeName>
        <fullName>BCL-3-binding protein</fullName>
    </alternativeName>
</protein>